<sequence length="286" mass="30863">MNDAVTLRSGCKVNLDLHITSRRDDGYHEIDSLFLPLDEPHDELVVTVGDAPGITVTCAIQGIDPTRNTVTRAYDAYAEASGFRPPLRVELRKGVPHGAGLGGGSANAAAILNHLESIAPHPLGRETLCRLAARIGADVPFFIHAVPCRASGIGEIITPVAWPYKGFTLLLACPQVQVSTAWAYGALDAAEEKQLRVRGCLTTGGVADRNSFSRESWLHNSFEPVVFASHPELRSLKEALLRHGAAAALMSGSGASVFALFRRREDAEAAFEQLKGHDIRVYQHLL</sequence>
<evidence type="ECO:0000255" key="1">
    <source>
        <dbReference type="HAMAP-Rule" id="MF_00061"/>
    </source>
</evidence>
<keyword id="KW-0067">ATP-binding</keyword>
<keyword id="KW-0414">Isoprene biosynthesis</keyword>
<keyword id="KW-0418">Kinase</keyword>
<keyword id="KW-0547">Nucleotide-binding</keyword>
<keyword id="KW-0808">Transferase</keyword>
<feature type="chain" id="PRO_1000007840" description="4-diphosphocytidyl-2-C-methyl-D-erythritol kinase">
    <location>
        <begin position="1"/>
        <end position="286"/>
    </location>
</feature>
<feature type="active site" evidence="1">
    <location>
        <position position="12"/>
    </location>
</feature>
<feature type="active site" evidence="1">
    <location>
        <position position="138"/>
    </location>
</feature>
<feature type="binding site" evidence="1">
    <location>
        <begin position="96"/>
        <end position="106"/>
    </location>
    <ligand>
        <name>ATP</name>
        <dbReference type="ChEBI" id="CHEBI:30616"/>
    </ligand>
</feature>
<accession>A1VDQ8</accession>
<gene>
    <name evidence="1" type="primary">ispE</name>
    <name type="ordered locus">Dvul_1557</name>
</gene>
<dbReference type="EC" id="2.7.1.148" evidence="1"/>
<dbReference type="EMBL" id="CP000527">
    <property type="protein sequence ID" value="ABM28574.1"/>
    <property type="molecule type" value="Genomic_DNA"/>
</dbReference>
<dbReference type="RefSeq" id="WP_011792343.1">
    <property type="nucleotide sequence ID" value="NC_008751.1"/>
</dbReference>
<dbReference type="SMR" id="A1VDQ8"/>
<dbReference type="KEGG" id="dvl:Dvul_1557"/>
<dbReference type="HOGENOM" id="CLU_053057_1_1_7"/>
<dbReference type="UniPathway" id="UPA00056">
    <property type="reaction ID" value="UER00094"/>
</dbReference>
<dbReference type="Proteomes" id="UP000009173">
    <property type="component" value="Chromosome"/>
</dbReference>
<dbReference type="GO" id="GO:0050515">
    <property type="term" value="F:4-(cytidine 5'-diphospho)-2-C-methyl-D-erythritol kinase activity"/>
    <property type="evidence" value="ECO:0007669"/>
    <property type="project" value="UniProtKB-UniRule"/>
</dbReference>
<dbReference type="GO" id="GO:0005524">
    <property type="term" value="F:ATP binding"/>
    <property type="evidence" value="ECO:0007669"/>
    <property type="project" value="UniProtKB-UniRule"/>
</dbReference>
<dbReference type="GO" id="GO:0019288">
    <property type="term" value="P:isopentenyl diphosphate biosynthetic process, methylerythritol 4-phosphate pathway"/>
    <property type="evidence" value="ECO:0007669"/>
    <property type="project" value="UniProtKB-UniRule"/>
</dbReference>
<dbReference type="GO" id="GO:0016114">
    <property type="term" value="P:terpenoid biosynthetic process"/>
    <property type="evidence" value="ECO:0007669"/>
    <property type="project" value="InterPro"/>
</dbReference>
<dbReference type="Gene3D" id="3.30.230.10">
    <property type="match status" value="1"/>
</dbReference>
<dbReference type="Gene3D" id="3.30.70.890">
    <property type="entry name" value="GHMP kinase, C-terminal domain"/>
    <property type="match status" value="1"/>
</dbReference>
<dbReference type="HAMAP" id="MF_00061">
    <property type="entry name" value="IspE"/>
    <property type="match status" value="1"/>
</dbReference>
<dbReference type="InterPro" id="IPR013750">
    <property type="entry name" value="GHMP_kinase_C_dom"/>
</dbReference>
<dbReference type="InterPro" id="IPR036554">
    <property type="entry name" value="GHMP_kinase_C_sf"/>
</dbReference>
<dbReference type="InterPro" id="IPR006204">
    <property type="entry name" value="GHMP_kinase_N_dom"/>
</dbReference>
<dbReference type="InterPro" id="IPR004424">
    <property type="entry name" value="IspE"/>
</dbReference>
<dbReference type="InterPro" id="IPR020568">
    <property type="entry name" value="Ribosomal_Su5_D2-typ_SF"/>
</dbReference>
<dbReference type="InterPro" id="IPR014721">
    <property type="entry name" value="Ribsml_uS5_D2-typ_fold_subgr"/>
</dbReference>
<dbReference type="NCBIfam" id="TIGR00154">
    <property type="entry name" value="ispE"/>
    <property type="match status" value="1"/>
</dbReference>
<dbReference type="PANTHER" id="PTHR43527">
    <property type="entry name" value="4-DIPHOSPHOCYTIDYL-2-C-METHYL-D-ERYTHRITOL KINASE, CHLOROPLASTIC"/>
    <property type="match status" value="1"/>
</dbReference>
<dbReference type="PANTHER" id="PTHR43527:SF2">
    <property type="entry name" value="4-DIPHOSPHOCYTIDYL-2-C-METHYL-D-ERYTHRITOL KINASE, CHLOROPLASTIC"/>
    <property type="match status" value="1"/>
</dbReference>
<dbReference type="Pfam" id="PF08544">
    <property type="entry name" value="GHMP_kinases_C"/>
    <property type="match status" value="1"/>
</dbReference>
<dbReference type="Pfam" id="PF00288">
    <property type="entry name" value="GHMP_kinases_N"/>
    <property type="match status" value="1"/>
</dbReference>
<dbReference type="PIRSF" id="PIRSF010376">
    <property type="entry name" value="IspE"/>
    <property type="match status" value="1"/>
</dbReference>
<dbReference type="SUPFAM" id="SSF55060">
    <property type="entry name" value="GHMP Kinase, C-terminal domain"/>
    <property type="match status" value="1"/>
</dbReference>
<dbReference type="SUPFAM" id="SSF54211">
    <property type="entry name" value="Ribosomal protein S5 domain 2-like"/>
    <property type="match status" value="1"/>
</dbReference>
<reference key="1">
    <citation type="journal article" date="2009" name="Environ. Microbiol.">
        <title>Contribution of mobile genetic elements to Desulfovibrio vulgaris genome plasticity.</title>
        <authorList>
            <person name="Walker C.B."/>
            <person name="Stolyar S."/>
            <person name="Chivian D."/>
            <person name="Pinel N."/>
            <person name="Gabster J.A."/>
            <person name="Dehal P.S."/>
            <person name="He Z."/>
            <person name="Yang Z.K."/>
            <person name="Yen H.C."/>
            <person name="Zhou J."/>
            <person name="Wall J.D."/>
            <person name="Hazen T.C."/>
            <person name="Arkin A.P."/>
            <person name="Stahl D.A."/>
        </authorList>
    </citation>
    <scope>NUCLEOTIDE SEQUENCE [LARGE SCALE GENOMIC DNA]</scope>
    <source>
        <strain>DP4</strain>
    </source>
</reference>
<comment type="function">
    <text evidence="1">Catalyzes the phosphorylation of the position 2 hydroxy group of 4-diphosphocytidyl-2C-methyl-D-erythritol.</text>
</comment>
<comment type="catalytic activity">
    <reaction evidence="1">
        <text>4-CDP-2-C-methyl-D-erythritol + ATP = 4-CDP-2-C-methyl-D-erythritol 2-phosphate + ADP + H(+)</text>
        <dbReference type="Rhea" id="RHEA:18437"/>
        <dbReference type="ChEBI" id="CHEBI:15378"/>
        <dbReference type="ChEBI" id="CHEBI:30616"/>
        <dbReference type="ChEBI" id="CHEBI:57823"/>
        <dbReference type="ChEBI" id="CHEBI:57919"/>
        <dbReference type="ChEBI" id="CHEBI:456216"/>
        <dbReference type="EC" id="2.7.1.148"/>
    </reaction>
</comment>
<comment type="pathway">
    <text evidence="1">Isoprenoid biosynthesis; isopentenyl diphosphate biosynthesis via DXP pathway; isopentenyl diphosphate from 1-deoxy-D-xylulose 5-phosphate: step 3/6.</text>
</comment>
<comment type="similarity">
    <text evidence="1">Belongs to the GHMP kinase family. IspE subfamily.</text>
</comment>
<name>ISPE_NITV4</name>
<protein>
    <recommendedName>
        <fullName evidence="1">4-diphosphocytidyl-2-C-methyl-D-erythritol kinase</fullName>
        <shortName evidence="1">CMK</shortName>
        <ecNumber evidence="1">2.7.1.148</ecNumber>
    </recommendedName>
    <alternativeName>
        <fullName evidence="1">4-(cytidine-5'-diphospho)-2-C-methyl-D-erythritol kinase</fullName>
    </alternativeName>
</protein>
<organism>
    <name type="scientific">Nitratidesulfovibrio vulgaris (strain DP4)</name>
    <name type="common">Desulfovibrio vulgaris</name>
    <dbReference type="NCBI Taxonomy" id="391774"/>
    <lineage>
        <taxon>Bacteria</taxon>
        <taxon>Pseudomonadati</taxon>
        <taxon>Thermodesulfobacteriota</taxon>
        <taxon>Desulfovibrionia</taxon>
        <taxon>Desulfovibrionales</taxon>
        <taxon>Desulfovibrionaceae</taxon>
        <taxon>Nitratidesulfovibrio</taxon>
    </lineage>
</organism>
<proteinExistence type="inferred from homology"/>